<evidence type="ECO:0000255" key="1">
    <source>
        <dbReference type="HAMAP-Rule" id="MF_01581"/>
    </source>
</evidence>
<feature type="signal peptide" evidence="1">
    <location>
        <begin position="1"/>
        <end position="28"/>
    </location>
</feature>
<feature type="chain" id="PRO_1000201002" description="UPF0482 protein YnfB">
    <location>
        <begin position="29"/>
        <end position="113"/>
    </location>
</feature>
<accession>B7LZX5</accession>
<dbReference type="EMBL" id="CU928160">
    <property type="protein sequence ID" value="CAQ98490.1"/>
    <property type="molecule type" value="Genomic_DNA"/>
</dbReference>
<dbReference type="RefSeq" id="WP_000705211.1">
    <property type="nucleotide sequence ID" value="NC_011741.1"/>
</dbReference>
<dbReference type="KEGG" id="ecr:ECIAI1_1633"/>
<dbReference type="HOGENOM" id="CLU_167574_0_0_6"/>
<dbReference type="HAMAP" id="MF_01581">
    <property type="entry name" value="UPF0482"/>
    <property type="match status" value="1"/>
</dbReference>
<dbReference type="InterPro" id="IPR009700">
    <property type="entry name" value="DUF1283"/>
</dbReference>
<dbReference type="NCBIfam" id="NF010180">
    <property type="entry name" value="PRK13659.1"/>
    <property type="match status" value="1"/>
</dbReference>
<dbReference type="Pfam" id="PF06932">
    <property type="entry name" value="DUF1283"/>
    <property type="match status" value="1"/>
</dbReference>
<organism>
    <name type="scientific">Escherichia coli O8 (strain IAI1)</name>
    <dbReference type="NCBI Taxonomy" id="585034"/>
    <lineage>
        <taxon>Bacteria</taxon>
        <taxon>Pseudomonadati</taxon>
        <taxon>Pseudomonadota</taxon>
        <taxon>Gammaproteobacteria</taxon>
        <taxon>Enterobacterales</taxon>
        <taxon>Enterobacteriaceae</taxon>
        <taxon>Escherichia</taxon>
    </lineage>
</organism>
<name>YNFB_ECO8A</name>
<gene>
    <name evidence="1" type="primary">ynfB</name>
    <name type="ordered locus">ECIAI1_1633</name>
</gene>
<reference key="1">
    <citation type="journal article" date="2009" name="PLoS Genet.">
        <title>Organised genome dynamics in the Escherichia coli species results in highly diverse adaptive paths.</title>
        <authorList>
            <person name="Touchon M."/>
            <person name="Hoede C."/>
            <person name="Tenaillon O."/>
            <person name="Barbe V."/>
            <person name="Baeriswyl S."/>
            <person name="Bidet P."/>
            <person name="Bingen E."/>
            <person name="Bonacorsi S."/>
            <person name="Bouchier C."/>
            <person name="Bouvet O."/>
            <person name="Calteau A."/>
            <person name="Chiapello H."/>
            <person name="Clermont O."/>
            <person name="Cruveiller S."/>
            <person name="Danchin A."/>
            <person name="Diard M."/>
            <person name="Dossat C."/>
            <person name="Karoui M.E."/>
            <person name="Frapy E."/>
            <person name="Garry L."/>
            <person name="Ghigo J.M."/>
            <person name="Gilles A.M."/>
            <person name="Johnson J."/>
            <person name="Le Bouguenec C."/>
            <person name="Lescat M."/>
            <person name="Mangenot S."/>
            <person name="Martinez-Jehanne V."/>
            <person name="Matic I."/>
            <person name="Nassif X."/>
            <person name="Oztas S."/>
            <person name="Petit M.A."/>
            <person name="Pichon C."/>
            <person name="Rouy Z."/>
            <person name="Ruf C.S."/>
            <person name="Schneider D."/>
            <person name="Tourret J."/>
            <person name="Vacherie B."/>
            <person name="Vallenet D."/>
            <person name="Medigue C."/>
            <person name="Rocha E.P.C."/>
            <person name="Denamur E."/>
        </authorList>
    </citation>
    <scope>NUCLEOTIDE SEQUENCE [LARGE SCALE GENOMIC DNA]</scope>
    <source>
        <strain>IAI1</strain>
    </source>
</reference>
<protein>
    <recommendedName>
        <fullName evidence="1">UPF0482 protein YnfB</fullName>
    </recommendedName>
</protein>
<sequence>MKITLSKRIGLLAILLPCALALSTTVHAETNKLVIESGDSAQSRQHAAMEKEQWNDTRNLRQKVNKRTEKEWDKADAAFDNRDKCEQSANINAYWEPNTLRCLDRRTGRVITP</sequence>
<comment type="similarity">
    <text evidence="1">Belongs to the UPF0482 family.</text>
</comment>
<proteinExistence type="inferred from homology"/>
<keyword id="KW-0732">Signal</keyword>